<proteinExistence type="evidence at protein level"/>
<dbReference type="EMBL" id="AF093257">
    <property type="protein sequence ID" value="AAC71021.1"/>
    <property type="molecule type" value="mRNA"/>
</dbReference>
<dbReference type="EMBL" id="AF093258">
    <property type="protein sequence ID" value="AAC71022.1"/>
    <property type="molecule type" value="mRNA"/>
</dbReference>
<dbReference type="EMBL" id="AY137385">
    <property type="protein sequence ID" value="AAM95461.1"/>
    <property type="molecule type" value="mRNA"/>
</dbReference>
<dbReference type="EMBL" id="AB019478">
    <property type="protein sequence ID" value="BAA34353.1"/>
    <property type="molecule type" value="mRNA"/>
</dbReference>
<dbReference type="EMBL" id="AB019479">
    <property type="protein sequence ID" value="BAA34354.1"/>
    <property type="molecule type" value="mRNA"/>
</dbReference>
<dbReference type="EMBL" id="AB089435">
    <property type="protein sequence ID" value="BAC07257.1"/>
    <property type="molecule type" value="mRNA"/>
</dbReference>
<dbReference type="CCDS" id="CCDS26687.1">
    <molecule id="Q9Z2Y3-5"/>
</dbReference>
<dbReference type="CCDS" id="CCDS36745.1">
    <molecule id="Q9Z2Y3-1"/>
</dbReference>
<dbReference type="CCDS" id="CCDS36746.1">
    <molecule id="Q9Z2Y3-2"/>
</dbReference>
<dbReference type="CCDS" id="CCDS70484.1">
    <molecule id="Q9Z2Y3-3"/>
</dbReference>
<dbReference type="CCDS" id="CCDS84048.1">
    <molecule id="Q9Z2Y3-4"/>
</dbReference>
<dbReference type="RefSeq" id="NP_001271118.1">
    <molecule id="Q9Z2Y3-3"/>
    <property type="nucleotide sequence ID" value="NM_001284189.2"/>
</dbReference>
<dbReference type="RefSeq" id="NP_001334527.1">
    <molecule id="Q9Z2Y3-4"/>
    <property type="nucleotide sequence ID" value="NM_001347598.1"/>
</dbReference>
<dbReference type="RefSeq" id="NP_036112.1">
    <molecule id="Q9Z2Y3-5"/>
    <property type="nucleotide sequence ID" value="NM_011982.4"/>
</dbReference>
<dbReference type="RefSeq" id="NP_671705.2">
    <molecule id="Q9Z2Y3-1"/>
    <property type="nucleotide sequence ID" value="NM_147176.4"/>
</dbReference>
<dbReference type="RefSeq" id="NP_687036.1">
    <molecule id="Q9Z2Y3-2"/>
    <property type="nucleotide sequence ID" value="NM_152134.3"/>
</dbReference>
<dbReference type="BMRB" id="Q9Z2Y3"/>
<dbReference type="SMR" id="Q9Z2Y3"/>
<dbReference type="BioGRID" id="205014">
    <property type="interactions" value="67"/>
</dbReference>
<dbReference type="CORUM" id="Q9Z2Y3"/>
<dbReference type="FunCoup" id="Q9Z2Y3">
    <property type="interactions" value="922"/>
</dbReference>
<dbReference type="IntAct" id="Q9Z2Y3">
    <property type="interactions" value="51"/>
</dbReference>
<dbReference type="MINT" id="Q9Z2Y3"/>
<dbReference type="STRING" id="10090.ENSMUSP00000078093"/>
<dbReference type="TCDB" id="8.A.29.1.1">
    <property type="family name" value="the homer1 (homer1) family of excitation-contraction coupling proteins"/>
</dbReference>
<dbReference type="GlyGen" id="Q9Z2Y3">
    <property type="glycosylation" value="3 sites, 1 O-linked glycan (3 sites)"/>
</dbReference>
<dbReference type="iPTMnet" id="Q9Z2Y3"/>
<dbReference type="PhosphoSitePlus" id="Q9Z2Y3"/>
<dbReference type="SwissPalm" id="Q9Z2Y3"/>
<dbReference type="jPOST" id="Q9Z2Y3"/>
<dbReference type="PaxDb" id="10090-ENSMUSP00000078093"/>
<dbReference type="PeptideAtlas" id="Q9Z2Y3"/>
<dbReference type="ProteomicsDB" id="273121">
    <molecule id="Q9Z2Y3-1"/>
</dbReference>
<dbReference type="ProteomicsDB" id="273122">
    <molecule id="Q9Z2Y3-2"/>
</dbReference>
<dbReference type="ProteomicsDB" id="273123">
    <molecule id="Q9Z2Y3-3"/>
</dbReference>
<dbReference type="ProteomicsDB" id="273124">
    <molecule id="Q9Z2Y3-4"/>
</dbReference>
<dbReference type="ProteomicsDB" id="273125">
    <molecule id="Q9Z2Y3-5"/>
</dbReference>
<dbReference type="Pumba" id="Q9Z2Y3"/>
<dbReference type="ABCD" id="Q9Z2Y3">
    <property type="antibodies" value="12 sequenced antibodies"/>
</dbReference>
<dbReference type="Antibodypedia" id="3836">
    <property type="antibodies" value="404 antibodies from 40 providers"/>
</dbReference>
<dbReference type="DNASU" id="26556"/>
<dbReference type="Ensembl" id="ENSMUST00000060490.11">
    <molecule id="Q9Z2Y3-3"/>
    <property type="protein sequence ID" value="ENSMUSP00000050471.5"/>
    <property type="gene ID" value="ENSMUSG00000007617.19"/>
</dbReference>
<dbReference type="Ensembl" id="ENSMUST00000079086.8">
    <molecule id="Q9Z2Y3-2"/>
    <property type="protein sequence ID" value="ENSMUSP00000078093.7"/>
    <property type="gene ID" value="ENSMUSG00000007617.19"/>
</dbReference>
<dbReference type="Ensembl" id="ENSMUST00000080127.12">
    <molecule id="Q9Z2Y3-1"/>
    <property type="protein sequence ID" value="ENSMUSP00000079026.6"/>
    <property type="gene ID" value="ENSMUSG00000007617.19"/>
</dbReference>
<dbReference type="Ensembl" id="ENSMUST00000102752.10">
    <molecule id="Q9Z2Y3-5"/>
    <property type="protein sequence ID" value="ENSMUSP00000099813.4"/>
    <property type="gene ID" value="ENSMUSG00000007617.19"/>
</dbReference>
<dbReference type="Ensembl" id="ENSMUST00000109492.9">
    <molecule id="Q9Z2Y3-4"/>
    <property type="protein sequence ID" value="ENSMUSP00000105118.2"/>
    <property type="gene ID" value="ENSMUSG00000007617.19"/>
</dbReference>
<dbReference type="GeneID" id="26556"/>
<dbReference type="KEGG" id="mmu:26556"/>
<dbReference type="UCSC" id="uc007rlc.3">
    <molecule id="Q9Z2Y3-1"/>
    <property type="organism name" value="mouse"/>
</dbReference>
<dbReference type="UCSC" id="uc007rld.3">
    <molecule id="Q9Z2Y3-3"/>
    <property type="organism name" value="mouse"/>
</dbReference>
<dbReference type="UCSC" id="uc007rle.3">
    <molecule id="Q9Z2Y3-2"/>
    <property type="organism name" value="mouse"/>
</dbReference>
<dbReference type="AGR" id="MGI:1347345"/>
<dbReference type="CTD" id="9456"/>
<dbReference type="MGI" id="MGI:1347345">
    <property type="gene designation" value="Homer1"/>
</dbReference>
<dbReference type="VEuPathDB" id="HostDB:ENSMUSG00000007617"/>
<dbReference type="eggNOG" id="ENOG502QR3K">
    <property type="taxonomic scope" value="Eukaryota"/>
</dbReference>
<dbReference type="GeneTree" id="ENSGT00940000156354"/>
<dbReference type="HOGENOM" id="CLU_103795_0_0_1"/>
<dbReference type="InParanoid" id="Q9Z2Y3"/>
<dbReference type="OMA" id="QXSAISK"/>
<dbReference type="PhylomeDB" id="Q9Z2Y3"/>
<dbReference type="TreeFam" id="TF325627"/>
<dbReference type="Reactome" id="R-MMU-6794361">
    <property type="pathway name" value="Neurexins and neuroligins"/>
</dbReference>
<dbReference type="BioGRID-ORCS" id="26556">
    <property type="hits" value="1 hit in 77 CRISPR screens"/>
</dbReference>
<dbReference type="CD-CODE" id="CE726F99">
    <property type="entry name" value="Postsynaptic density"/>
</dbReference>
<dbReference type="ChiTaRS" id="Homer1">
    <property type="organism name" value="mouse"/>
</dbReference>
<dbReference type="PRO" id="PR:Q9Z2Y3"/>
<dbReference type="Proteomes" id="UP000000589">
    <property type="component" value="Chromosome 13"/>
</dbReference>
<dbReference type="RNAct" id="Q9Z2Y3">
    <property type="molecule type" value="protein"/>
</dbReference>
<dbReference type="Bgee" id="ENSMUSG00000007617">
    <property type="expression patterns" value="Expressed in dorsal striatum and 249 other cell types or tissues"/>
</dbReference>
<dbReference type="ExpressionAtlas" id="Q9Z2Y3">
    <property type="expression patterns" value="baseline and differential"/>
</dbReference>
<dbReference type="GO" id="GO:0045177">
    <property type="term" value="C:apical part of cell"/>
    <property type="evidence" value="ECO:0000314"/>
    <property type="project" value="MGI"/>
</dbReference>
<dbReference type="GO" id="GO:0030424">
    <property type="term" value="C:axon"/>
    <property type="evidence" value="ECO:0000314"/>
    <property type="project" value="MGI"/>
</dbReference>
<dbReference type="GO" id="GO:0043034">
    <property type="term" value="C:costamere"/>
    <property type="evidence" value="ECO:0000314"/>
    <property type="project" value="MGI"/>
</dbReference>
<dbReference type="GO" id="GO:0005737">
    <property type="term" value="C:cytoplasm"/>
    <property type="evidence" value="ECO:0000314"/>
    <property type="project" value="MGI"/>
</dbReference>
<dbReference type="GO" id="GO:0043197">
    <property type="term" value="C:dendritic spine"/>
    <property type="evidence" value="ECO:0007669"/>
    <property type="project" value="UniProtKB-SubCell"/>
</dbReference>
<dbReference type="GO" id="GO:0098978">
    <property type="term" value="C:glutamatergic synapse"/>
    <property type="evidence" value="ECO:0000314"/>
    <property type="project" value="SynGO"/>
</dbReference>
<dbReference type="GO" id="GO:0016020">
    <property type="term" value="C:membrane"/>
    <property type="evidence" value="ECO:0000314"/>
    <property type="project" value="MGI"/>
</dbReference>
<dbReference type="GO" id="GO:0043005">
    <property type="term" value="C:neuron projection"/>
    <property type="evidence" value="ECO:0000314"/>
    <property type="project" value="BHF-UCL"/>
</dbReference>
<dbReference type="GO" id="GO:0044309">
    <property type="term" value="C:neuron spine"/>
    <property type="evidence" value="ECO:0000250"/>
    <property type="project" value="UniProtKB"/>
</dbReference>
<dbReference type="GO" id="GO:0005886">
    <property type="term" value="C:plasma membrane"/>
    <property type="evidence" value="ECO:0000314"/>
    <property type="project" value="MGI"/>
</dbReference>
<dbReference type="GO" id="GO:0098794">
    <property type="term" value="C:postsynapse"/>
    <property type="evidence" value="ECO:0000314"/>
    <property type="project" value="MGI"/>
</dbReference>
<dbReference type="GO" id="GO:0099524">
    <property type="term" value="C:postsynaptic cytosol"/>
    <property type="evidence" value="ECO:0000314"/>
    <property type="project" value="SynGO"/>
</dbReference>
<dbReference type="GO" id="GO:0014069">
    <property type="term" value="C:postsynaptic density"/>
    <property type="evidence" value="ECO:0000314"/>
    <property type="project" value="BHF-UCL"/>
</dbReference>
<dbReference type="GO" id="GO:0030018">
    <property type="term" value="C:Z disc"/>
    <property type="evidence" value="ECO:0000314"/>
    <property type="project" value="MGI"/>
</dbReference>
<dbReference type="GO" id="GO:0035256">
    <property type="term" value="F:G protein-coupled glutamate receptor binding"/>
    <property type="evidence" value="ECO:0007669"/>
    <property type="project" value="InterPro"/>
</dbReference>
<dbReference type="GO" id="GO:0044325">
    <property type="term" value="F:transmembrane transporter binding"/>
    <property type="evidence" value="ECO:0007669"/>
    <property type="project" value="Ensembl"/>
</dbReference>
<dbReference type="GO" id="GO:0048148">
    <property type="term" value="P:behavioral response to cocaine"/>
    <property type="evidence" value="ECO:0000315"/>
    <property type="project" value="MGI"/>
</dbReference>
<dbReference type="GO" id="GO:0007216">
    <property type="term" value="P:G protein-coupled glutamate receptor signaling pathway"/>
    <property type="evidence" value="ECO:0000304"/>
    <property type="project" value="MGI"/>
</dbReference>
<dbReference type="GO" id="GO:0051928">
    <property type="term" value="P:positive regulation of calcium ion transport"/>
    <property type="evidence" value="ECO:0000315"/>
    <property type="project" value="MGI"/>
</dbReference>
<dbReference type="GO" id="GO:0051262">
    <property type="term" value="P:protein tetramerization"/>
    <property type="evidence" value="ECO:0000250"/>
    <property type="project" value="UniProtKB"/>
</dbReference>
<dbReference type="GO" id="GO:0090279">
    <property type="term" value="P:regulation of calcium ion import"/>
    <property type="evidence" value="ECO:0000315"/>
    <property type="project" value="BHF-UCL"/>
</dbReference>
<dbReference type="GO" id="GO:1902950">
    <property type="term" value="P:regulation of dendritic spine maintenance"/>
    <property type="evidence" value="ECO:0000250"/>
    <property type="project" value="UniProtKB"/>
</dbReference>
<dbReference type="GO" id="GO:2001256">
    <property type="term" value="P:regulation of store-operated calcium entry"/>
    <property type="evidence" value="ECO:0000315"/>
    <property type="project" value="BHF-UCL"/>
</dbReference>
<dbReference type="GO" id="GO:0051966">
    <property type="term" value="P:regulation of synaptic transmission, glutamatergic"/>
    <property type="evidence" value="ECO:0000250"/>
    <property type="project" value="UniProtKB"/>
</dbReference>
<dbReference type="GO" id="GO:0051592">
    <property type="term" value="P:response to calcium ion"/>
    <property type="evidence" value="ECO:0007669"/>
    <property type="project" value="Ensembl"/>
</dbReference>
<dbReference type="GO" id="GO:0003009">
    <property type="term" value="P:skeletal muscle contraction"/>
    <property type="evidence" value="ECO:0000315"/>
    <property type="project" value="MGI"/>
</dbReference>
<dbReference type="GO" id="GO:0048741">
    <property type="term" value="P:skeletal muscle fiber development"/>
    <property type="evidence" value="ECO:0000315"/>
    <property type="project" value="MGI"/>
</dbReference>
<dbReference type="CDD" id="cd01206">
    <property type="entry name" value="EVH1_Homer_Vesl"/>
    <property type="match status" value="1"/>
</dbReference>
<dbReference type="FunFam" id="1.20.5.1700:FF:000003">
    <property type="entry name" value="Homer homolog 1 (Drosophila)"/>
    <property type="match status" value="1"/>
</dbReference>
<dbReference type="FunFam" id="2.30.29.30:FF:000014">
    <property type="entry name" value="Homer homolog 1 (Drosophila)"/>
    <property type="match status" value="1"/>
</dbReference>
<dbReference type="Gene3D" id="1.20.5.1700">
    <property type="match status" value="1"/>
</dbReference>
<dbReference type="Gene3D" id="2.30.29.30">
    <property type="entry name" value="Pleckstrin-homology domain (PH domain)/Phosphotyrosine-binding domain (PTB)"/>
    <property type="match status" value="1"/>
</dbReference>
<dbReference type="InterPro" id="IPR045027">
    <property type="entry name" value="Homer"/>
</dbReference>
<dbReference type="InterPro" id="IPR044100">
    <property type="entry name" value="Homer_EVH1"/>
</dbReference>
<dbReference type="InterPro" id="IPR011993">
    <property type="entry name" value="PH-like_dom_sf"/>
</dbReference>
<dbReference type="InterPro" id="IPR000697">
    <property type="entry name" value="WH1/EVH1_dom"/>
</dbReference>
<dbReference type="PANTHER" id="PTHR10918">
    <property type="entry name" value="HOMER"/>
    <property type="match status" value="1"/>
</dbReference>
<dbReference type="Pfam" id="PF00568">
    <property type="entry name" value="WH1"/>
    <property type="match status" value="1"/>
</dbReference>
<dbReference type="SMART" id="SM00461">
    <property type="entry name" value="WH1"/>
    <property type="match status" value="1"/>
</dbReference>
<dbReference type="SUPFAM" id="SSF50729">
    <property type="entry name" value="PH domain-like"/>
    <property type="match status" value="1"/>
</dbReference>
<dbReference type="SUPFAM" id="SSF57997">
    <property type="entry name" value="Tropomyosin"/>
    <property type="match status" value="1"/>
</dbReference>
<dbReference type="PROSITE" id="PS50229">
    <property type="entry name" value="WH1"/>
    <property type="match status" value="1"/>
</dbReference>
<accession>Q9Z2Y3</accession>
<accession>Q8K3E1</accession>
<accession>Q8K4M8</accession>
<accession>Q9Z0E9</accession>
<accession>Q9Z216</accession>
<protein>
    <recommendedName>
        <fullName evidence="23">Homer protein homolog 1</fullName>
        <shortName>Homer-1</shortName>
    </recommendedName>
    <alternativeName>
        <fullName>VASP/Ena-related gene up-regulated during seizure and LTP 1</fullName>
        <shortName evidence="22">Vesl-1</shortName>
    </alternativeName>
</protein>
<organism>
    <name type="scientific">Mus musculus</name>
    <name type="common">Mouse</name>
    <dbReference type="NCBI Taxonomy" id="10090"/>
    <lineage>
        <taxon>Eukaryota</taxon>
        <taxon>Metazoa</taxon>
        <taxon>Chordata</taxon>
        <taxon>Craniata</taxon>
        <taxon>Vertebrata</taxon>
        <taxon>Euteleostomi</taxon>
        <taxon>Mammalia</taxon>
        <taxon>Eutheria</taxon>
        <taxon>Euarchontoglires</taxon>
        <taxon>Glires</taxon>
        <taxon>Rodentia</taxon>
        <taxon>Myomorpha</taxon>
        <taxon>Muroidea</taxon>
        <taxon>Muridae</taxon>
        <taxon>Murinae</taxon>
        <taxon>Mus</taxon>
        <taxon>Mus</taxon>
    </lineage>
</organism>
<gene>
    <name evidence="24" type="primary">Homer1</name>
    <name type="synonym">Vesl1</name>
</gene>
<evidence type="ECO:0000250" key="1"/>
<evidence type="ECO:0000250" key="2">
    <source>
        <dbReference type="UniProtKB" id="Q86YM7"/>
    </source>
</evidence>
<evidence type="ECO:0000250" key="3">
    <source>
        <dbReference type="UniProtKB" id="Q9Z214"/>
    </source>
</evidence>
<evidence type="ECO:0000255" key="4"/>
<evidence type="ECO:0000255" key="5">
    <source>
        <dbReference type="PROSITE-ProRule" id="PRU00410"/>
    </source>
</evidence>
<evidence type="ECO:0000256" key="6">
    <source>
        <dbReference type="SAM" id="MobiDB-lite"/>
    </source>
</evidence>
<evidence type="ECO:0000269" key="7">
    <source>
    </source>
</evidence>
<evidence type="ECO:0000269" key="8">
    <source>
    </source>
</evidence>
<evidence type="ECO:0000269" key="9">
    <source>
    </source>
</evidence>
<evidence type="ECO:0000269" key="10">
    <source>
    </source>
</evidence>
<evidence type="ECO:0000269" key="11">
    <source>
    </source>
</evidence>
<evidence type="ECO:0000269" key="12">
    <source>
    </source>
</evidence>
<evidence type="ECO:0000269" key="13">
    <source>
    </source>
</evidence>
<evidence type="ECO:0000269" key="14">
    <source>
    </source>
</evidence>
<evidence type="ECO:0000269" key="15">
    <source>
    </source>
</evidence>
<evidence type="ECO:0000269" key="16">
    <source ref="3"/>
</evidence>
<evidence type="ECO:0000269" key="17">
    <source ref="4"/>
</evidence>
<evidence type="ECO:0000303" key="18">
    <source>
    </source>
</evidence>
<evidence type="ECO:0000303" key="19">
    <source>
    </source>
</evidence>
<evidence type="ECO:0000303" key="20">
    <source>
    </source>
</evidence>
<evidence type="ECO:0000303" key="21">
    <source ref="3"/>
</evidence>
<evidence type="ECO:0000303" key="22">
    <source ref="4"/>
</evidence>
<evidence type="ECO:0000305" key="23"/>
<evidence type="ECO:0000312" key="24">
    <source>
        <dbReference type="MGI" id="MGI:1347345"/>
    </source>
</evidence>
<evidence type="ECO:0007744" key="25">
    <source>
    </source>
</evidence>
<sequence>MGEQPIFSTRAHVFQIDPNTKKNWVPTSKHAVTVSYFYDSTRNVYRIISLDGSKAIINSTITPNMTFTKTSQKFGQWADSRANTVYGLGFSSEHHLSKFAEKFQEFKEAARLAKEKSQEKMELTSTPSQESAGGDLQSPLTPESINGTDDERTPDVTQNSEPRAEPTQNALPFPHSAGDRTQALSHASSAISKHWEAELATLKGNNAKLTAALLESTANVKQWKQQLAAYQEEAERLHKRVTELECVSSQANAVHSHKTELNQTVQELEETLKVKEEEIERLKQEIDNARELQEQRDSLTQKLQEVEIRNKDLEGQLSDLEQRLEKSQNEQEAFRSNLKTLLEILDGKIFELTELRDNLAKLLECS</sequence>
<feature type="initiator methionine" description="Removed" evidence="2">
    <location>
        <position position="1"/>
    </location>
</feature>
<feature type="chain" id="PRO_0000191006" description="Homer protein homolog 1">
    <location>
        <begin position="2"/>
        <end position="366"/>
    </location>
</feature>
<feature type="domain" description="WH1" evidence="5">
    <location>
        <begin position="2"/>
        <end position="110"/>
    </location>
</feature>
<feature type="region of interest" description="Disordered" evidence="6">
    <location>
        <begin position="114"/>
        <end position="189"/>
    </location>
</feature>
<feature type="region of interest" description="Required for tetramerization" evidence="3">
    <location>
        <begin position="302"/>
        <end position="366"/>
    </location>
</feature>
<feature type="coiled-coil region" evidence="4">
    <location>
        <begin position="193"/>
        <end position="364"/>
    </location>
</feature>
<feature type="compositionally biased region" description="Polar residues" evidence="6">
    <location>
        <begin position="138"/>
        <end position="147"/>
    </location>
</feature>
<feature type="compositionally biased region" description="Polar residues" evidence="6">
    <location>
        <begin position="155"/>
        <end position="170"/>
    </location>
</feature>
<feature type="modified residue" description="N-acetylglycine" evidence="2">
    <location>
        <position position="2"/>
    </location>
</feature>
<feature type="modified residue" description="Phosphoserine" evidence="25">
    <location>
        <position position="318"/>
    </location>
</feature>
<feature type="splice variant" id="VSP_009060" description="In isoform 2." evidence="18">
    <original>MG</original>
    <variation>MLIHHHNRRALCKGSPTT</variation>
    <location>
        <begin position="1"/>
        <end position="2"/>
    </location>
</feature>
<feature type="splice variant" id="VSP_009061" description="In isoform 2 and isoform 3." evidence="18 20">
    <location>
        <begin position="176"/>
        <end position="187"/>
    </location>
</feature>
<feature type="splice variant" id="VSP_009062" description="In isoform 5." evidence="20 21">
    <original>SAGDRTQALSH</original>
    <variation>RYTFNSAIMIK</variation>
    <location>
        <begin position="176"/>
        <end position="186"/>
    </location>
</feature>
<feature type="splice variant" id="VSP_009063" description="In isoform 4." evidence="22">
    <original>AGDRTQALSHASSAISKHWEAELATLK</original>
    <variation>SSRWIFFPYCEDSQLSLLESSSGLGYF</variation>
    <location>
        <begin position="177"/>
        <end position="203"/>
    </location>
</feature>
<feature type="splice variant" id="VSP_009064" description="In isoform 5." evidence="20 21">
    <location>
        <begin position="187"/>
        <end position="366"/>
    </location>
</feature>
<feature type="splice variant" id="VSP_009065" description="In isoform 4." evidence="22">
    <location>
        <begin position="204"/>
        <end position="366"/>
    </location>
</feature>
<feature type="sequence conflict" description="In Ref. 3; BAA34354." evidence="23" ref="3">
    <original>K</original>
    <variation>N</variation>
    <location>
        <position position="193"/>
    </location>
</feature>
<feature type="sequence conflict" description="In Ref. 3; BAA34354." evidence="23" ref="3">
    <original>A</original>
    <variation>V</variation>
    <location>
        <position position="197"/>
    </location>
</feature>
<feature type="sequence conflict" description="In Ref. 3; BAA34354." evidence="23" ref="3">
    <original>N</original>
    <variation>T</variation>
    <location>
        <position position="205"/>
    </location>
</feature>
<name>HOME1_MOUSE</name>
<keyword id="KW-0007">Acetylation</keyword>
<keyword id="KW-0025">Alternative splicing</keyword>
<keyword id="KW-0966">Cell projection</keyword>
<keyword id="KW-0175">Coiled coil</keyword>
<keyword id="KW-0963">Cytoplasm</keyword>
<keyword id="KW-0597">Phosphoprotein</keyword>
<keyword id="KW-1185">Reference proteome</keyword>
<keyword id="KW-0770">Synapse</keyword>
<reference key="1">
    <citation type="journal article" date="1998" name="Neuron">
        <title>Homer regulates the association of group 1 metabotropic glutamate receptors with multivalent complexes of homer-related, synaptic proteins.</title>
        <authorList>
            <person name="Xiao B."/>
            <person name="Tu J.C."/>
            <person name="Petralia R.S."/>
            <person name="Yuan J.P."/>
            <person name="Doan A."/>
            <person name="Breder C.D."/>
            <person name="Ruggiero A."/>
            <person name="Lanahan A.A."/>
            <person name="Wenthold R.J."/>
            <person name="Worley P.F."/>
        </authorList>
    </citation>
    <scope>NUCLEOTIDE SEQUENCE [MRNA] (ISOFORMS 3 AND 5)</scope>
    <source>
        <strain>C57BL/6J</strain>
        <tissue>Forebrain</tissue>
    </source>
</reference>
<reference key="2">
    <citation type="journal article" date="2002" name="Biochem. Biophys. Res. Commun.">
        <title>An N-terminal sequence specific for a novel Homer1 isoform controls trafficking of group I metabotropic glutamate receptor in mammalian cells.</title>
        <authorList>
            <person name="Saito H."/>
            <person name="Kimura M."/>
            <person name="Inanobe A."/>
            <person name="Ohe T."/>
            <person name="Kurachi Y."/>
        </authorList>
    </citation>
    <scope>NUCLEOTIDE SEQUENCE [MRNA] (ISOFORM 2)</scope>
    <scope>TISSUE SPECIFICITY (ISOFORM 2)</scope>
    <source>
        <strain>BALB/cJ</strain>
        <tissue>Heart</tissue>
    </source>
</reference>
<reference key="3">
    <citation type="submission" date="1998-11" db="EMBL/GenBank/DDBJ databases">
        <title>Mouse Vesl family of EVH-protein that interacts with group I mGluRs.</title>
        <authorList>
            <person name="Inokuchi K."/>
            <person name="Hayashi F."/>
        </authorList>
    </citation>
    <scope>NUCLEOTIDE SEQUENCE [MRNA] (ISOFORMS 1 AND 5)</scope>
    <scope>TISSUE SPECIFICITY (ISOFORMS 1 AND 5)</scope>
    <source>
        <strain>C57BL/6N</strain>
        <tissue>Brain cortex</tissue>
    </source>
</reference>
<reference key="4">
    <citation type="submission" date="2002-08" db="EMBL/GenBank/DDBJ databases">
        <title>Genomic structure of mouse vesl-1 gene.</title>
        <authorList>
            <person name="Hayashi F."/>
            <person name="Hirai K."/>
            <person name="Inokuchi K."/>
        </authorList>
    </citation>
    <scope>NUCLEOTIDE SEQUENCE [MRNA] (ISOFORM 4)</scope>
    <scope>TISSUE SPECIFICITY (ISOFORM 4)</scope>
    <source>
        <strain>129/SvJ</strain>
        <tissue>Hippocampus</tissue>
    </source>
</reference>
<reference key="5">
    <citation type="journal article" date="1998" name="Neuron">
        <title>Homer binds a novel proline-rich motif and links group 1 metabotropic glutamate receptors with IP3 receptors.</title>
        <authorList>
            <person name="Tu J.C."/>
            <person name="Xiao B."/>
            <person name="Yuan J.P."/>
            <person name="Lanahan A.A."/>
            <person name="Leoffert K."/>
            <person name="Li M."/>
            <person name="Linden D.J."/>
            <person name="Worley P.F."/>
        </authorList>
    </citation>
    <scope>INTERACTION WITH GRM1; GRM5; DYN3 AND ITPR1</scope>
</reference>
<reference key="6">
    <citation type="journal article" date="2000" name="Curr. Opin. Neurobiol.">
        <title>Homer: a link between neural activity and glutamate receptor function.</title>
        <authorList>
            <person name="Xiao B."/>
            <person name="Tu J.C."/>
            <person name="Worley P.F."/>
        </authorList>
    </citation>
    <scope>REVIEW</scope>
</reference>
<reference key="7">
    <citation type="journal article" date="2002" name="Cell Calcium">
        <title>Homer proteins and InsP(3) receptors co-localise in the longitudinal sarcoplasmic reticulum of skeletal muscle fibres.</title>
        <authorList>
            <person name="Salanova M."/>
            <person name="Priori G."/>
            <person name="Barone V."/>
            <person name="Intravaia E."/>
            <person name="Flucher B."/>
            <person name="Ciruela F."/>
            <person name="McIlhinney R.A.J."/>
            <person name="Parys J.B."/>
            <person name="Mikoshiba K."/>
            <person name="Sorrentino V."/>
        </authorList>
    </citation>
    <scope>TISSUE SPECIFICITY</scope>
    <scope>INTERACTION WITH ITPR1</scope>
</reference>
<reference key="8">
    <citation type="journal article" date="2007" name="Biochem. Biophys. Res. Commun.">
        <title>Homer1c interacts with Hippi and protects striatal neurons from apoptosis.</title>
        <authorList>
            <person name="Sakamoto K."/>
            <person name="Yoshida S."/>
            <person name="Ikegami K."/>
            <person name="Minakami R."/>
            <person name="Kato A."/>
            <person name="Udo H."/>
            <person name="Sugiyama H."/>
        </authorList>
    </citation>
    <scope>INTERACTION WITH IFT57</scope>
</reference>
<reference key="9">
    <citation type="journal article" date="2010" name="Cell">
        <title>A tissue-specific atlas of mouse protein phosphorylation and expression.</title>
        <authorList>
            <person name="Huttlin E.L."/>
            <person name="Jedrychowski M.P."/>
            <person name="Elias J.E."/>
            <person name="Goswami T."/>
            <person name="Rad R."/>
            <person name="Beausoleil S.A."/>
            <person name="Villen J."/>
            <person name="Haas W."/>
            <person name="Sowa M.E."/>
            <person name="Gygi S.P."/>
        </authorList>
    </citation>
    <scope>PHOSPHORYLATION [LARGE SCALE ANALYSIS] AT SER-318</scope>
    <scope>IDENTIFICATION BY MASS SPECTROMETRY [LARGE SCALE ANALYSIS]</scope>
    <source>
        <tissue>Brain</tissue>
    </source>
</reference>
<reference key="10">
    <citation type="journal article" date="2011" name="Hum. Mol. Genet.">
        <title>Synaptic dysfunction and abnormal behaviors in mice lacking major isoforms of Shank3.</title>
        <authorList>
            <person name="Wang X."/>
            <person name="McCoy P.A."/>
            <person name="Rodriguiz R.M."/>
            <person name="Pan Y."/>
            <person name="Je H.S."/>
            <person name="Roberts A.C."/>
            <person name="Kim C.J."/>
            <person name="Berrios J."/>
            <person name="Colvin J.S."/>
            <person name="Bousquet-Moore D."/>
            <person name="Lorenzo I."/>
            <person name="Wu G."/>
            <person name="Weinberg R.J."/>
            <person name="Ehlers M.D."/>
            <person name="Philpot B.D."/>
            <person name="Beaudet A.L."/>
            <person name="Wetsel W.C."/>
            <person name="Jiang Y.H."/>
        </authorList>
    </citation>
    <scope>INTERACTION WITH SHANK3</scope>
</reference>
<reference key="11">
    <citation type="journal article" date="2013" name="Nature">
        <title>SHANK3 overexpression causes manic-like behaviour with unique pharmacogenetic properties.</title>
        <authorList>
            <person name="Han K."/>
            <person name="Holder J.L. Jr."/>
            <person name="Schaaf C.P."/>
            <person name="Lu H."/>
            <person name="Chen H."/>
            <person name="Kang H."/>
            <person name="Tang J."/>
            <person name="Wu Z."/>
            <person name="Hao S."/>
            <person name="Cheung S.W."/>
            <person name="Yu P."/>
            <person name="Sun H."/>
            <person name="Breman A.M."/>
            <person name="Patel A."/>
            <person name="Lu H.C."/>
            <person name="Zoghbi H.Y."/>
        </authorList>
    </citation>
    <scope>TISSUE SPECIFICITY</scope>
    <scope>INTERACTION WITH SHANK3</scope>
    <scope>SUBCELLULAR LOCATION</scope>
</reference>
<reference key="12">
    <citation type="journal article" date="2015" name="Prog. Neuro-Psychopharmacol. Biol. Psychiatry">
        <title>D-aspartate dysregulation in Ddo(-/-) mice modulates phencyclidine-induced gene expression changes of postsynaptic density molecules in cortex and striatum.</title>
        <authorList>
            <person name="de Bartolomeis A."/>
            <person name="Errico F."/>
            <person name="Aceto G."/>
            <person name="Tomasetti C."/>
            <person name="Usiello A."/>
            <person name="Iasevoli F."/>
        </authorList>
    </citation>
    <scope>TISSUE SPECIFICITY (ISOFORMS 1 AND 5)</scope>
</reference>
<reference key="13">
    <citation type="journal article" date="2016" name="Neuron">
        <title>SRGAP2 and its human-specific paralog co-regulate the development of excitatory and inhibitory synapses.</title>
        <authorList>
            <person name="Fossati M."/>
            <person name="Pizzarelli R."/>
            <person name="Schmidt E.R."/>
            <person name="Kupferman J.V."/>
            <person name="Stroebel D."/>
            <person name="Polleux F."/>
            <person name="Charrier C."/>
        </authorList>
    </citation>
    <scope>INTERACTION WITH SRGAP2</scope>
</reference>
<comment type="function">
    <text evidence="1 2 3">Postsynaptic density scaffolding protein. Binds and cross-links cytoplasmic regions of GRM1, GRM5, ITPR1, DNM3, RYR1, RYR2, SHANK1 and SHANK3. By physically linking GRM1 and GRM5 with ER-associated ITPR1 receptors, it aids the coupling of surface receptors to intracellular calcium release. May also couple GRM1 to PI3 kinase through its interaction with AGAP2. Isoform 1 regulates the trafficking and surface expression of GRM5. Differentially regulates the functions of the calcium activated channel ryanodine receptors RYR1 and RYR2. Isoform 1 decreases the activity of RYR2, and increases the activity of RYR1, whereas isoform 5 counteracts the effects by competing for binding sites. Isoform 3 regulates the trafficking and surface expression of GRM5. Isoform 5 acts as a natural dominant negative, in dynamic competition with constitutively expressed isoform 1, isoform 2 and isoform 3 to regulate synaptic metabotropic glutamate function. Isoform 5, may be involved in the structural changes that occur at synapses during long-lasting neuronal plasticity and development (By similarity). Forms a high-order complex with SHANK1, which in turn is necessary for the structural and functional integrity of dendritic spines (By similarity). Negatively regulates T cell activation by inhibiting the calcineurin-NFAT pathway. Acts by competing with calcineurin/PPP3CA for NFAT protein binding, hence preventing NFAT activation by PPP3CA (By similarity).</text>
</comment>
<comment type="subunit">
    <text evidence="2 3 8 9 10 11 13 15">Tetramer; this tetrameric structure is critical for forming the high-order complex with SHANK1, which in turn is necessary for the structural and functional integrity of dendritic spines (By similarity). Isoform 1, isoform 2 and isoform 3 encode a coiled-coil structure that mediates homo- and heteromultimerization (By similarity). Interacts with GRM1, GRM5, ITPR1, DNM3, RYR1, RYR2 and SHANK3 (PubMed:12379179, PubMed:21558424, PubMed:24153177). Interacts with IFT57 and OPHN1 (PubMed:17107665). Interacts with SHANK1; forms high-order polymerized complex with a mesh-like network structure, at least composed of SHANK1, HOMER1 and DLGAP1; the complex formation is SHANK1 multimerization dependent (By similarity). Interacts with NFATC4 (By similarity). Interacts with DAGLA (via PPXXF motif); this interaction is required for the cell membrane localization of DAGLA (By similarity). Interacts with SRGAP2 (PubMed:27373832).</text>
</comment>
<comment type="interaction">
    <interactant intactId="EBI-396980">
        <id>Q9Z2Y3</id>
    </interactant>
    <interactant intactId="EBI-400152">
        <id>Q9D415</id>
        <label>Dlgap1</label>
    </interactant>
    <organismsDiffer>false</organismsDiffer>
    <experiments>4</experiments>
</comment>
<comment type="interaction">
    <interactant intactId="EBI-396980">
        <id>Q9Z2Y3</id>
    </interactant>
    <interactant intactId="EBI-771450">
        <id>Q4ACU6</id>
        <label>Shank3</label>
    </interactant>
    <organismsDiffer>false</organismsDiffer>
    <experiments>8</experiments>
</comment>
<comment type="subcellular location">
    <subcellularLocation>
        <location evidence="11">Cytoplasm</location>
    </subcellularLocation>
    <subcellularLocation>
        <location evidence="11">Postsynaptic density</location>
    </subcellularLocation>
    <subcellularLocation>
        <location evidence="11">Synapse</location>
    </subcellularLocation>
    <subcellularLocation>
        <location evidence="3">Cell projection</location>
        <location evidence="3">Dendritic spine</location>
    </subcellularLocation>
    <text>Isoform 1 inhibits surface expression of GRM5 causing it to be retained in the endoplasmic reticulum. The N-terminal of isoform 2 may facilitate trafficking of the complex with GRM5 from the endoplasmic reticulum (ER) to the plasma membrane (PM).</text>
</comment>
<comment type="alternative products">
    <event type="alternative splicing"/>
    <isoform>
        <id>Q9Z2Y3-1</id>
        <name>1</name>
        <name>Vesl-1L</name>
        <name evidence="19">1b/c</name>
        <sequence type="displayed"/>
    </isoform>
    <isoform>
        <id>Q9Z2Y3-2</id>
        <name>2</name>
        <name>1d</name>
        <sequence type="described" ref="VSP_009060 VSP_009061"/>
    </isoform>
    <isoform>
        <id>Q9Z2Y3-3</id>
        <name>3</name>
        <name>1b</name>
        <sequence type="described" ref="VSP_009061"/>
    </isoform>
    <isoform>
        <id>Q9Z2Y3-4</id>
        <name>4</name>
        <name>Vesl-1M</name>
        <sequence type="described" ref="VSP_009063 VSP_009065"/>
    </isoform>
    <isoform>
        <id>Q9Z2Y3-5</id>
        <name>5</name>
        <name>Vesl-1S</name>
        <name evidence="19">1a</name>
        <sequence type="described" ref="VSP_009062 VSP_009064"/>
    </isoform>
</comment>
<comment type="tissue specificity">
    <molecule>Isoform 1</molecule>
    <text evidence="8 12 16">Expressed in skeletal muscle at the level of the Z line, in the forebrain and cerebellum.</text>
</comment>
<comment type="tissue specificity">
    <molecule>Isoform 2</molecule>
    <text evidence="7 8">Expressed in cardiac and skeletal muscle.</text>
</comment>
<comment type="tissue specificity">
    <molecule>Isoform 3</molecule>
    <text evidence="8 14 16">Expressed in skeletal muscle at the level of the Z line, in the forebrain and cerebellum.</text>
</comment>
<comment type="tissue specificity">
    <molecule>Isoform 4</molecule>
    <text evidence="17">Expressed in the hippocampus.</text>
</comment>
<comment type="tissue specificity">
    <molecule>Isoform 5</molecule>
    <text evidence="8 12 14">Expressed in skeletal muscle at the level of the Z line, in the heart, forebrain and cerebellum.</text>
</comment>
<comment type="domain">
    <text evidence="3">The WH1 domain interacts with the PPXXF motif in GRM1, GRM5, RYR1, RYR2, ITPR1, SHANK 1 and SHANK3. The coiled-Coil domain forms an antiparallel tetrameric arrangement (By similarity).</text>
</comment>
<comment type="similarity">
    <text evidence="23">Belongs to the Homer family.</text>
</comment>